<proteinExistence type="inferred from homology"/>
<sequence>MSQQVIIFDTTLRDGEQALQASLSVKEKLQIALALERMGVDVMEVGFPVSSPGDFESVQTIARQVKNSRVCALARCVEKDIDVAAESLKVAEAFRIHTFIATSPMHIATKLRSTLDEVIERAIYMVKRARNYTDDVEFSCEDAGRTPIADLARVVEAAINAGATTINIPDTVGYTMPFEFAGIISGLYERVPNIDKAIISVHTHDDLGLAVGNSLAAVHAGARQVEGAMNGIGERAGNCSLEEVIMAIKVRKDILNVHTAINHQEIWRTSQLVSQICNMPIPANKAIVGSGAFAHSSGIHQDGVLKNRENYEIMTPESIGLNQIQLNLTSRSGRAAVKHRMDEMGYKESEYNLDNLYDAFLKLADKKGQVFDYDLEALAFIGKQQEEPEHFRLDYFSVQSGSNDIATAAVKLACGEEVKAEVANGNGPVDAVYQAINRITDYNVELVKYSLTAKGHGKDALGQVDIVANYNGRRFHGVGLATDIVESSAKAMVHVLNNIWRAAEVEKELQRKAQHNENNKETV</sequence>
<keyword id="KW-0028">Amino-acid biosynthesis</keyword>
<keyword id="KW-0100">Branched-chain amino acid biosynthesis</keyword>
<keyword id="KW-0963">Cytoplasm</keyword>
<keyword id="KW-0432">Leucine biosynthesis</keyword>
<keyword id="KW-0464">Manganese</keyword>
<keyword id="KW-0479">Metal-binding</keyword>
<keyword id="KW-1185">Reference proteome</keyword>
<keyword id="KW-0808">Transferase</keyword>
<name>LEU1_ECO27</name>
<feature type="chain" id="PRO_1000149183" description="2-isopropylmalate synthase">
    <location>
        <begin position="1"/>
        <end position="523"/>
    </location>
</feature>
<feature type="domain" description="Pyruvate carboxyltransferase" evidence="1">
    <location>
        <begin position="5"/>
        <end position="267"/>
    </location>
</feature>
<feature type="region of interest" description="Regulatory domain" evidence="1">
    <location>
        <begin position="392"/>
        <end position="523"/>
    </location>
</feature>
<feature type="binding site" evidence="1">
    <location>
        <position position="14"/>
    </location>
    <ligand>
        <name>Mn(2+)</name>
        <dbReference type="ChEBI" id="CHEBI:29035"/>
    </ligand>
</feature>
<feature type="binding site" evidence="1">
    <location>
        <position position="202"/>
    </location>
    <ligand>
        <name>Mn(2+)</name>
        <dbReference type="ChEBI" id="CHEBI:29035"/>
    </ligand>
</feature>
<feature type="binding site" evidence="1">
    <location>
        <position position="204"/>
    </location>
    <ligand>
        <name>Mn(2+)</name>
        <dbReference type="ChEBI" id="CHEBI:29035"/>
    </ligand>
</feature>
<feature type="binding site" evidence="1">
    <location>
        <position position="238"/>
    </location>
    <ligand>
        <name>Mn(2+)</name>
        <dbReference type="ChEBI" id="CHEBI:29035"/>
    </ligand>
</feature>
<reference key="1">
    <citation type="journal article" date="2009" name="J. Bacteriol.">
        <title>Complete genome sequence and comparative genome analysis of enteropathogenic Escherichia coli O127:H6 strain E2348/69.</title>
        <authorList>
            <person name="Iguchi A."/>
            <person name="Thomson N.R."/>
            <person name="Ogura Y."/>
            <person name="Saunders D."/>
            <person name="Ooka T."/>
            <person name="Henderson I.R."/>
            <person name="Harris D."/>
            <person name="Asadulghani M."/>
            <person name="Kurokawa K."/>
            <person name="Dean P."/>
            <person name="Kenny B."/>
            <person name="Quail M.A."/>
            <person name="Thurston S."/>
            <person name="Dougan G."/>
            <person name="Hayashi T."/>
            <person name="Parkhill J."/>
            <person name="Frankel G."/>
        </authorList>
    </citation>
    <scope>NUCLEOTIDE SEQUENCE [LARGE SCALE GENOMIC DNA]</scope>
    <source>
        <strain>E2348/69 / EPEC</strain>
    </source>
</reference>
<organism>
    <name type="scientific">Escherichia coli O127:H6 (strain E2348/69 / EPEC)</name>
    <dbReference type="NCBI Taxonomy" id="574521"/>
    <lineage>
        <taxon>Bacteria</taxon>
        <taxon>Pseudomonadati</taxon>
        <taxon>Pseudomonadota</taxon>
        <taxon>Gammaproteobacteria</taxon>
        <taxon>Enterobacterales</taxon>
        <taxon>Enterobacteriaceae</taxon>
        <taxon>Escherichia</taxon>
    </lineage>
</organism>
<evidence type="ECO:0000255" key="1">
    <source>
        <dbReference type="HAMAP-Rule" id="MF_01025"/>
    </source>
</evidence>
<protein>
    <recommendedName>
        <fullName evidence="1">2-isopropylmalate synthase</fullName>
        <ecNumber evidence="1">2.3.3.13</ecNumber>
    </recommendedName>
    <alternativeName>
        <fullName evidence="1">Alpha-IPM synthase</fullName>
    </alternativeName>
    <alternativeName>
        <fullName evidence="1">Alpha-isopropylmalate synthase</fullName>
    </alternativeName>
</protein>
<gene>
    <name evidence="1" type="primary">leuA</name>
    <name type="ordered locus">E2348C_0079</name>
</gene>
<accession>B7UIC4</accession>
<comment type="function">
    <text evidence="1">Catalyzes the condensation of the acetyl group of acetyl-CoA with 3-methyl-2-oxobutanoate (2-ketoisovalerate) to form 3-carboxy-3-hydroxy-4-methylpentanoate (2-isopropylmalate).</text>
</comment>
<comment type="catalytic activity">
    <reaction evidence="1">
        <text>3-methyl-2-oxobutanoate + acetyl-CoA + H2O = (2S)-2-isopropylmalate + CoA + H(+)</text>
        <dbReference type="Rhea" id="RHEA:21524"/>
        <dbReference type="ChEBI" id="CHEBI:1178"/>
        <dbReference type="ChEBI" id="CHEBI:11851"/>
        <dbReference type="ChEBI" id="CHEBI:15377"/>
        <dbReference type="ChEBI" id="CHEBI:15378"/>
        <dbReference type="ChEBI" id="CHEBI:57287"/>
        <dbReference type="ChEBI" id="CHEBI:57288"/>
        <dbReference type="EC" id="2.3.3.13"/>
    </reaction>
</comment>
<comment type="cofactor">
    <cofactor evidence="1">
        <name>Mn(2+)</name>
        <dbReference type="ChEBI" id="CHEBI:29035"/>
    </cofactor>
</comment>
<comment type="pathway">
    <text evidence="1">Amino-acid biosynthesis; L-leucine biosynthesis; L-leucine from 3-methyl-2-oxobutanoate: step 1/4.</text>
</comment>
<comment type="subunit">
    <text evidence="1">Homodimer.</text>
</comment>
<comment type="subcellular location">
    <subcellularLocation>
        <location evidence="1">Cytoplasm</location>
    </subcellularLocation>
</comment>
<comment type="similarity">
    <text evidence="1">Belongs to the alpha-IPM synthase/homocitrate synthase family. LeuA type 1 subfamily.</text>
</comment>
<dbReference type="EC" id="2.3.3.13" evidence="1"/>
<dbReference type="EMBL" id="FM180568">
    <property type="protein sequence ID" value="CAS07627.1"/>
    <property type="molecule type" value="Genomic_DNA"/>
</dbReference>
<dbReference type="RefSeq" id="WP_000082851.1">
    <property type="nucleotide sequence ID" value="NC_011601.1"/>
</dbReference>
<dbReference type="SMR" id="B7UIC4"/>
<dbReference type="KEGG" id="ecg:E2348C_0079"/>
<dbReference type="HOGENOM" id="CLU_022158_0_1_6"/>
<dbReference type="UniPathway" id="UPA00048">
    <property type="reaction ID" value="UER00070"/>
</dbReference>
<dbReference type="Proteomes" id="UP000008205">
    <property type="component" value="Chromosome"/>
</dbReference>
<dbReference type="GO" id="GO:0005829">
    <property type="term" value="C:cytosol"/>
    <property type="evidence" value="ECO:0007669"/>
    <property type="project" value="TreeGrafter"/>
</dbReference>
<dbReference type="GO" id="GO:0003852">
    <property type="term" value="F:2-isopropylmalate synthase activity"/>
    <property type="evidence" value="ECO:0007669"/>
    <property type="project" value="UniProtKB-UniRule"/>
</dbReference>
<dbReference type="GO" id="GO:0003985">
    <property type="term" value="F:acetyl-CoA C-acetyltransferase activity"/>
    <property type="evidence" value="ECO:0007669"/>
    <property type="project" value="UniProtKB-UniRule"/>
</dbReference>
<dbReference type="GO" id="GO:0030145">
    <property type="term" value="F:manganese ion binding"/>
    <property type="evidence" value="ECO:0007669"/>
    <property type="project" value="UniProtKB-UniRule"/>
</dbReference>
<dbReference type="GO" id="GO:0009098">
    <property type="term" value="P:L-leucine biosynthetic process"/>
    <property type="evidence" value="ECO:0007669"/>
    <property type="project" value="UniProtKB-UniRule"/>
</dbReference>
<dbReference type="CDD" id="cd07940">
    <property type="entry name" value="DRE_TIM_IPMS"/>
    <property type="match status" value="1"/>
</dbReference>
<dbReference type="FunFam" id="1.10.238.260:FF:000001">
    <property type="entry name" value="2-isopropylmalate synthase"/>
    <property type="match status" value="1"/>
</dbReference>
<dbReference type="FunFam" id="3.20.20.70:FF:000010">
    <property type="entry name" value="2-isopropylmalate synthase"/>
    <property type="match status" value="1"/>
</dbReference>
<dbReference type="FunFam" id="3.30.160.270:FF:000001">
    <property type="entry name" value="2-isopropylmalate synthase"/>
    <property type="match status" value="1"/>
</dbReference>
<dbReference type="Gene3D" id="1.10.238.260">
    <property type="match status" value="1"/>
</dbReference>
<dbReference type="Gene3D" id="3.30.160.270">
    <property type="match status" value="1"/>
</dbReference>
<dbReference type="Gene3D" id="3.20.20.70">
    <property type="entry name" value="Aldolase class I"/>
    <property type="match status" value="1"/>
</dbReference>
<dbReference type="HAMAP" id="MF_01025">
    <property type="entry name" value="LeuA_type1"/>
    <property type="match status" value="1"/>
</dbReference>
<dbReference type="InterPro" id="IPR050073">
    <property type="entry name" value="2-IPM_HCS-like"/>
</dbReference>
<dbReference type="InterPro" id="IPR013709">
    <property type="entry name" value="2-isopropylmalate_synth_dimer"/>
</dbReference>
<dbReference type="InterPro" id="IPR002034">
    <property type="entry name" value="AIPM/Hcit_synth_CS"/>
</dbReference>
<dbReference type="InterPro" id="IPR013785">
    <property type="entry name" value="Aldolase_TIM"/>
</dbReference>
<dbReference type="InterPro" id="IPR054691">
    <property type="entry name" value="LeuA/HCS_post-cat"/>
</dbReference>
<dbReference type="InterPro" id="IPR036230">
    <property type="entry name" value="LeuA_allosteric_dom_sf"/>
</dbReference>
<dbReference type="InterPro" id="IPR005671">
    <property type="entry name" value="LeuA_bact_synth"/>
</dbReference>
<dbReference type="InterPro" id="IPR000891">
    <property type="entry name" value="PYR_CT"/>
</dbReference>
<dbReference type="NCBIfam" id="TIGR00973">
    <property type="entry name" value="leuA_bact"/>
    <property type="match status" value="1"/>
</dbReference>
<dbReference type="NCBIfam" id="NF002084">
    <property type="entry name" value="PRK00915.1-1"/>
    <property type="match status" value="1"/>
</dbReference>
<dbReference type="NCBIfam" id="NF002086">
    <property type="entry name" value="PRK00915.1-3"/>
    <property type="match status" value="1"/>
</dbReference>
<dbReference type="PANTHER" id="PTHR10277:SF9">
    <property type="entry name" value="2-ISOPROPYLMALATE SYNTHASE 1, CHLOROPLASTIC-RELATED"/>
    <property type="match status" value="1"/>
</dbReference>
<dbReference type="PANTHER" id="PTHR10277">
    <property type="entry name" value="HOMOCITRATE SYNTHASE-RELATED"/>
    <property type="match status" value="1"/>
</dbReference>
<dbReference type="Pfam" id="PF22617">
    <property type="entry name" value="HCS_D2"/>
    <property type="match status" value="1"/>
</dbReference>
<dbReference type="Pfam" id="PF00682">
    <property type="entry name" value="HMGL-like"/>
    <property type="match status" value="1"/>
</dbReference>
<dbReference type="Pfam" id="PF08502">
    <property type="entry name" value="LeuA_dimer"/>
    <property type="match status" value="1"/>
</dbReference>
<dbReference type="SMART" id="SM00917">
    <property type="entry name" value="LeuA_dimer"/>
    <property type="match status" value="1"/>
</dbReference>
<dbReference type="SUPFAM" id="SSF110921">
    <property type="entry name" value="2-isopropylmalate synthase LeuA, allosteric (dimerisation) domain"/>
    <property type="match status" value="1"/>
</dbReference>
<dbReference type="SUPFAM" id="SSF51569">
    <property type="entry name" value="Aldolase"/>
    <property type="match status" value="1"/>
</dbReference>
<dbReference type="PROSITE" id="PS00815">
    <property type="entry name" value="AIPM_HOMOCIT_SYNTH_1"/>
    <property type="match status" value="1"/>
</dbReference>
<dbReference type="PROSITE" id="PS00816">
    <property type="entry name" value="AIPM_HOMOCIT_SYNTH_2"/>
    <property type="match status" value="1"/>
</dbReference>
<dbReference type="PROSITE" id="PS50991">
    <property type="entry name" value="PYR_CT"/>
    <property type="match status" value="1"/>
</dbReference>